<protein>
    <recommendedName>
        <fullName>Genome polyprotein</fullName>
    </recommendedName>
    <component>
        <recommendedName>
            <fullName>Leader protein</fullName>
            <shortName>L</shortName>
        </recommendedName>
    </component>
    <component>
        <recommendedName>
            <fullName>Capsid protein VP0</fullName>
        </recommendedName>
        <alternativeName>
            <fullName>VP4-VP2</fullName>
        </alternativeName>
    </component>
    <component>
        <recommendedName>
            <fullName>Capsid protein VP4</fullName>
        </recommendedName>
        <alternativeName>
            <fullName>P1A</fullName>
        </alternativeName>
        <alternativeName>
            <fullName>Rho</fullName>
        </alternativeName>
        <alternativeName>
            <fullName>Virion protein 4</fullName>
        </alternativeName>
    </component>
    <component>
        <recommendedName>
            <fullName>Capsid protein VP2</fullName>
        </recommendedName>
        <alternativeName>
            <fullName>Beta</fullName>
        </alternativeName>
        <alternativeName>
            <fullName>P1B</fullName>
        </alternativeName>
        <alternativeName>
            <fullName>Virion protein 2</fullName>
        </alternativeName>
    </component>
    <component>
        <recommendedName>
            <fullName>Capsid protein VP3</fullName>
        </recommendedName>
        <alternativeName>
            <fullName>Gamma</fullName>
        </alternativeName>
        <alternativeName>
            <fullName>P1C</fullName>
        </alternativeName>
        <alternativeName>
            <fullName>Virion protein 3</fullName>
        </alternativeName>
    </component>
    <component>
        <recommendedName>
            <fullName>Capsid protein VP1</fullName>
        </recommendedName>
        <alternativeName>
            <fullName>Alpha</fullName>
        </alternativeName>
        <alternativeName>
            <fullName>P1D</fullName>
        </alternativeName>
        <alternativeName>
            <fullName>Virion protein 1</fullName>
        </alternativeName>
    </component>
    <component>
        <recommendedName>
            <fullName>Protein 2A</fullName>
            <shortName>P2A</shortName>
        </recommendedName>
        <alternativeName>
            <fullName>G</fullName>
        </alternativeName>
    </component>
    <component>
        <recommendedName>
            <fullName>Protein 2B</fullName>
            <shortName>I</shortName>
            <shortName>P2B</shortName>
        </recommendedName>
    </component>
    <component>
        <recommendedName>
            <fullName>Protein 2C</fullName>
            <shortName>C</shortName>
            <shortName>P2C</shortName>
            <ecNumber>3.6.4.13</ecNumber>
        </recommendedName>
    </component>
    <component>
        <recommendedName>
            <fullName>Protein 3A</fullName>
            <shortName>P3A</shortName>
        </recommendedName>
    </component>
    <component>
        <recommendedName>
            <fullName>VPg</fullName>
            <shortName>P3B</shortName>
        </recommendedName>
        <alternativeName>
            <fullName>H</fullName>
        </alternativeName>
        <alternativeName>
            <fullName>Protein 3B</fullName>
        </alternativeName>
    </component>
    <component>
        <recommendedName>
            <fullName>Protease 3C</fullName>
            <shortName>P3C</shortName>
            <ecNumber evidence="22">3.4.22.28</ecNumber>
        </recommendedName>
        <alternativeName>
            <fullName>Picornain 3C</fullName>
        </alternativeName>
        <alternativeName>
            <fullName>p22</fullName>
        </alternativeName>
    </component>
    <component>
        <recommendedName>
            <fullName>RNA-directed RNA polymerase</fullName>
            <shortName>RdRp</shortName>
            <ecNumber evidence="10 16">2.7.7.48</ecNumber>
        </recommendedName>
        <alternativeName>
            <fullName>3D polymerase</fullName>
            <shortName>3Dpol</shortName>
        </alternativeName>
        <alternativeName>
            <fullName>E</fullName>
        </alternativeName>
        <alternativeName>
            <fullName>Protein 3D</fullName>
            <shortName>3D</shortName>
        </alternativeName>
    </component>
</protein>
<keyword id="KW-0002">3D-structure</keyword>
<keyword id="KW-0067">ATP-binding</keyword>
<keyword id="KW-0167">Capsid protein</keyword>
<keyword id="KW-0191">Covalent protein-RNA linkage</keyword>
<keyword id="KW-1015">Disulfide bond</keyword>
<keyword id="KW-1262">Eukaryotic host gene expression shutoff by virus</keyword>
<keyword id="KW-1193">Eukaryotic host translation shutoff by virus</keyword>
<keyword id="KW-0347">Helicase</keyword>
<keyword id="KW-1035">Host cytoplasm</keyword>
<keyword id="KW-1036">Host cytoplasmic vesicle</keyword>
<keyword id="KW-1190">Host gene expression shutoff by virus</keyword>
<keyword id="KW-1043">Host membrane</keyword>
<keyword id="KW-1048">Host nucleus</keyword>
<keyword id="KW-0945">Host-virus interaction</keyword>
<keyword id="KW-0378">Hydrolase</keyword>
<keyword id="KW-1090">Inhibition of host innate immune response by virus</keyword>
<keyword id="KW-1088">Inhibition of host RIG-I by virus</keyword>
<keyword id="KW-1113">Inhibition of host RLR pathway by virus</keyword>
<keyword id="KW-0407">Ion channel</keyword>
<keyword id="KW-0406">Ion transport</keyword>
<keyword id="KW-0449">Lipoprotein</keyword>
<keyword id="KW-0472">Membrane</keyword>
<keyword id="KW-0479">Metal-binding</keyword>
<keyword id="KW-0519">Myristate</keyword>
<keyword id="KW-0547">Nucleotide-binding</keyword>
<keyword id="KW-0548">Nucleotidyltransferase</keyword>
<keyword id="KW-0597">Phosphoprotein</keyword>
<keyword id="KW-0645">Protease</keyword>
<keyword id="KW-0688">Ribosomal frameshifting</keyword>
<keyword id="KW-0694">RNA-binding</keyword>
<keyword id="KW-0696">RNA-directed RNA polymerase</keyword>
<keyword id="KW-1143">T=pseudo3 icosahedral capsid protein</keyword>
<keyword id="KW-0788">Thiol protease</keyword>
<keyword id="KW-0808">Transferase</keyword>
<keyword id="KW-0813">Transport</keyword>
<keyword id="KW-1161">Viral attachment to host cell</keyword>
<keyword id="KW-0899">Viral immunoevasion</keyword>
<keyword id="KW-1182">Viral ion channel</keyword>
<keyword id="KW-0693">Viral RNA replication</keyword>
<keyword id="KW-0946">Virion</keyword>
<keyword id="KW-1160">Virus entry into host cell</keyword>
<keyword id="KW-0862">Zinc</keyword>
<keyword id="KW-0863">Zinc-finger</keyword>
<dbReference type="EC" id="3.6.4.13"/>
<dbReference type="EC" id="3.4.22.28" evidence="22"/>
<dbReference type="EC" id="2.7.7.48" evidence="10 16"/>
<dbReference type="EMBL" id="DQ294633">
    <property type="protein sequence ID" value="ABB97066.1"/>
    <property type="molecule type" value="Genomic_RNA"/>
</dbReference>
<dbReference type="PDB" id="1MEC">
    <property type="method" value="X-ray"/>
    <property type="resolution" value="3.20 A"/>
    <property type="chains" value="1=625-898, 2=138-393, 3=394-624, 4=68-137"/>
</dbReference>
<dbReference type="PDB" id="2M7Y">
    <property type="method" value="NMR"/>
    <property type="chains" value="A=1-67"/>
</dbReference>
<dbReference type="PDB" id="2MEV">
    <property type="method" value="X-ray"/>
    <property type="resolution" value="3.00 A"/>
    <property type="chains" value="1=625-901, 2=138-393, 3=394-624, 4=68-137"/>
</dbReference>
<dbReference type="PDB" id="2MMH">
    <property type="method" value="NMR"/>
    <property type="chains" value="A=1-67"/>
</dbReference>
<dbReference type="PDB" id="2MMI">
    <property type="method" value="NMR"/>
    <property type="chains" value="A=1-67"/>
</dbReference>
<dbReference type="PDB" id="2MMK">
    <property type="method" value="NMR"/>
    <property type="chains" value="A=1-67"/>
</dbReference>
<dbReference type="PDB" id="2MML">
    <property type="method" value="NMR"/>
    <property type="chains" value="A=1-67"/>
</dbReference>
<dbReference type="PDB" id="4NYZ">
    <property type="method" value="X-ray"/>
    <property type="resolution" value="2.15 A"/>
    <property type="chains" value="A=1834-2293"/>
</dbReference>
<dbReference type="PDB" id="4NZ0">
    <property type="method" value="X-ray"/>
    <property type="resolution" value="2.80 A"/>
    <property type="chains" value="A/B/C/D/E/F=1834-2293"/>
</dbReference>
<dbReference type="PDB" id="4Y2C">
    <property type="method" value="X-ray"/>
    <property type="resolution" value="2.20 A"/>
    <property type="chains" value="A=1834-2293"/>
</dbReference>
<dbReference type="PDB" id="4Y3C">
    <property type="method" value="X-ray"/>
    <property type="resolution" value="3.20 A"/>
    <property type="chains" value="A/B/C/D/E/F=1834-2293"/>
</dbReference>
<dbReference type="PDB" id="7BNY">
    <property type="method" value="X-ray"/>
    <property type="resolution" value="2.62 A"/>
    <property type="chains" value="A/B/C/D=902-1044"/>
</dbReference>
<dbReference type="PDB" id="7NWT">
    <property type="method" value="EM"/>
    <property type="resolution" value="2.66 A"/>
    <property type="chains" value="AA/BB/CC=902-1044"/>
</dbReference>
<dbReference type="PDBsum" id="1MEC"/>
<dbReference type="PDBsum" id="2M7Y"/>
<dbReference type="PDBsum" id="2MEV"/>
<dbReference type="PDBsum" id="2MMH"/>
<dbReference type="PDBsum" id="2MMI"/>
<dbReference type="PDBsum" id="2MMK"/>
<dbReference type="PDBsum" id="2MML"/>
<dbReference type="PDBsum" id="4NYZ"/>
<dbReference type="PDBsum" id="4NZ0"/>
<dbReference type="PDBsum" id="4Y2C"/>
<dbReference type="PDBsum" id="4Y3C"/>
<dbReference type="PDBsum" id="7BNY"/>
<dbReference type="PDBsum" id="7NWT"/>
<dbReference type="BMRB" id="P12296"/>
<dbReference type="EMDB" id="EMD-12635"/>
<dbReference type="SMR" id="P12296"/>
<dbReference type="iPTMnet" id="P12296"/>
<dbReference type="EvolutionaryTrace" id="P12296"/>
<dbReference type="Proteomes" id="UP000008663">
    <property type="component" value="Segment"/>
</dbReference>
<dbReference type="GO" id="GO:0044162">
    <property type="term" value="C:host cell cytoplasmic vesicle membrane"/>
    <property type="evidence" value="ECO:0007669"/>
    <property type="project" value="UniProtKB-SubCell"/>
</dbReference>
<dbReference type="GO" id="GO:0044196">
    <property type="term" value="C:host cell nucleolus"/>
    <property type="evidence" value="ECO:0007669"/>
    <property type="project" value="UniProtKB-SubCell"/>
</dbReference>
<dbReference type="GO" id="GO:0016020">
    <property type="term" value="C:membrane"/>
    <property type="evidence" value="ECO:0007669"/>
    <property type="project" value="UniProtKB-KW"/>
</dbReference>
<dbReference type="GO" id="GO:0039618">
    <property type="term" value="C:T=pseudo3 icosahedral viral capsid"/>
    <property type="evidence" value="ECO:0007669"/>
    <property type="project" value="UniProtKB-KW"/>
</dbReference>
<dbReference type="GO" id="GO:0005524">
    <property type="term" value="F:ATP binding"/>
    <property type="evidence" value="ECO:0007669"/>
    <property type="project" value="UniProtKB-KW"/>
</dbReference>
<dbReference type="GO" id="GO:0016887">
    <property type="term" value="F:ATP hydrolysis activity"/>
    <property type="evidence" value="ECO:0007669"/>
    <property type="project" value="RHEA"/>
</dbReference>
<dbReference type="GO" id="GO:0015267">
    <property type="term" value="F:channel activity"/>
    <property type="evidence" value="ECO:0007669"/>
    <property type="project" value="UniProtKB-KW"/>
</dbReference>
<dbReference type="GO" id="GO:0004197">
    <property type="term" value="F:cysteine-type endopeptidase activity"/>
    <property type="evidence" value="ECO:0007669"/>
    <property type="project" value="UniProtKB-EC"/>
</dbReference>
<dbReference type="GO" id="GO:0003723">
    <property type="term" value="F:RNA binding"/>
    <property type="evidence" value="ECO:0007669"/>
    <property type="project" value="UniProtKB-KW"/>
</dbReference>
<dbReference type="GO" id="GO:0003724">
    <property type="term" value="F:RNA helicase activity"/>
    <property type="evidence" value="ECO:0007669"/>
    <property type="project" value="UniProtKB-EC"/>
</dbReference>
<dbReference type="GO" id="GO:0003968">
    <property type="term" value="F:RNA-directed RNA polymerase activity"/>
    <property type="evidence" value="ECO:0007669"/>
    <property type="project" value="UniProtKB-KW"/>
</dbReference>
<dbReference type="GO" id="GO:0005198">
    <property type="term" value="F:structural molecule activity"/>
    <property type="evidence" value="ECO:0007669"/>
    <property type="project" value="InterPro"/>
</dbReference>
<dbReference type="GO" id="GO:0008270">
    <property type="term" value="F:zinc ion binding"/>
    <property type="evidence" value="ECO:0007669"/>
    <property type="project" value="UniProtKB-KW"/>
</dbReference>
<dbReference type="GO" id="GO:0006351">
    <property type="term" value="P:DNA-templated transcription"/>
    <property type="evidence" value="ECO:0007669"/>
    <property type="project" value="InterPro"/>
</dbReference>
<dbReference type="GO" id="GO:0034220">
    <property type="term" value="P:monoatomic ion transmembrane transport"/>
    <property type="evidence" value="ECO:0007669"/>
    <property type="project" value="UniProtKB-KW"/>
</dbReference>
<dbReference type="GO" id="GO:0039690">
    <property type="term" value="P:positive stranded viral RNA replication"/>
    <property type="evidence" value="ECO:0000314"/>
    <property type="project" value="UniProtKB"/>
</dbReference>
<dbReference type="GO" id="GO:0006508">
    <property type="term" value="P:proteolysis"/>
    <property type="evidence" value="ECO:0007669"/>
    <property type="project" value="UniProtKB-KW"/>
</dbReference>
<dbReference type="GO" id="GO:0046718">
    <property type="term" value="P:symbiont entry into host cell"/>
    <property type="evidence" value="ECO:0007669"/>
    <property type="project" value="UniProtKB-KW"/>
</dbReference>
<dbReference type="GO" id="GO:0039520">
    <property type="term" value="P:symbiont-mediated activation of host autophagy"/>
    <property type="evidence" value="ECO:0000250"/>
    <property type="project" value="UniProtKB"/>
</dbReference>
<dbReference type="GO" id="GO:0039540">
    <property type="term" value="P:symbiont-mediated suppression of host cytoplasmic pattern recognition receptor signaling pathway via inhibition of RIG-I activity"/>
    <property type="evidence" value="ECO:0007669"/>
    <property type="project" value="UniProtKB-KW"/>
</dbReference>
<dbReference type="GO" id="GO:0039657">
    <property type="term" value="P:symbiont-mediated suppression of host gene expression"/>
    <property type="evidence" value="ECO:0007669"/>
    <property type="project" value="UniProtKB-KW"/>
</dbReference>
<dbReference type="GO" id="GO:0075523">
    <property type="term" value="P:viral translational frameshifting"/>
    <property type="evidence" value="ECO:0007669"/>
    <property type="project" value="UniProtKB-KW"/>
</dbReference>
<dbReference type="GO" id="GO:0019062">
    <property type="term" value="P:virion attachment to host cell"/>
    <property type="evidence" value="ECO:0007669"/>
    <property type="project" value="UniProtKB-KW"/>
</dbReference>
<dbReference type="CDD" id="cd23211">
    <property type="entry name" value="Cardiovirus_RdRp"/>
    <property type="match status" value="1"/>
</dbReference>
<dbReference type="CDD" id="cd00205">
    <property type="entry name" value="rhv_like"/>
    <property type="match status" value="3"/>
</dbReference>
<dbReference type="FunFam" id="1.20.960.20:FF:000002">
    <property type="entry name" value="Genome polyprotein"/>
    <property type="match status" value="1"/>
</dbReference>
<dbReference type="FunFam" id="2.40.10.10:FF:000145">
    <property type="entry name" value="Genome polyprotein"/>
    <property type="match status" value="1"/>
</dbReference>
<dbReference type="FunFam" id="2.60.120.20:FF:000009">
    <property type="entry name" value="Genome polyprotein"/>
    <property type="match status" value="1"/>
</dbReference>
<dbReference type="FunFam" id="2.60.120.20:FF:000013">
    <property type="entry name" value="Genome polyprotein"/>
    <property type="match status" value="1"/>
</dbReference>
<dbReference type="FunFam" id="3.30.70.270:FF:000046">
    <property type="entry name" value="Genome polyprotein"/>
    <property type="match status" value="1"/>
</dbReference>
<dbReference type="FunFam" id="3.30.70.270:FF:000065">
    <property type="entry name" value="Genome polyprotein"/>
    <property type="match status" value="1"/>
</dbReference>
<dbReference type="FunFam" id="4.10.90.10:FF:000002">
    <property type="entry name" value="Genome polyprotein"/>
    <property type="match status" value="1"/>
</dbReference>
<dbReference type="Gene3D" id="1.20.960.20">
    <property type="match status" value="1"/>
</dbReference>
<dbReference type="Gene3D" id="2.60.120.20">
    <property type="match status" value="3"/>
</dbReference>
<dbReference type="Gene3D" id="3.30.70.270">
    <property type="match status" value="2"/>
</dbReference>
<dbReference type="Gene3D" id="4.10.90.10">
    <property type="entry name" value="Capsid protein VP4 superfamily, Picornavirus"/>
    <property type="match status" value="1"/>
</dbReference>
<dbReference type="Gene3D" id="2.40.10.10">
    <property type="entry name" value="Trypsin-like serine proteases"/>
    <property type="match status" value="1"/>
</dbReference>
<dbReference type="InterPro" id="IPR015031">
    <property type="entry name" value="Capsid_VP4_Picornavir"/>
</dbReference>
<dbReference type="InterPro" id="IPR037080">
    <property type="entry name" value="Capsid_VP4_sf_Picornavirus"/>
</dbReference>
<dbReference type="InterPro" id="IPR043502">
    <property type="entry name" value="DNA/RNA_pol_sf"/>
</dbReference>
<dbReference type="InterPro" id="IPR004004">
    <property type="entry name" value="Helic/Pol/Pept_Calicivir-typ"/>
</dbReference>
<dbReference type="InterPro" id="IPR000605">
    <property type="entry name" value="Helicase_SF3_ssDNA/RNA_vir"/>
</dbReference>
<dbReference type="InterPro" id="IPR014759">
    <property type="entry name" value="Helicase_SF3_ssRNA_vir"/>
</dbReference>
<dbReference type="InterPro" id="IPR021573">
    <property type="entry name" value="Leader_pept_picornaV"/>
</dbReference>
<dbReference type="InterPro" id="IPR044067">
    <property type="entry name" value="PCV_3C_PRO"/>
</dbReference>
<dbReference type="InterPro" id="IPR000199">
    <property type="entry name" value="Peptidase_C3A/C3B_picornavir"/>
</dbReference>
<dbReference type="InterPro" id="IPR009003">
    <property type="entry name" value="Peptidase_S1_PA"/>
</dbReference>
<dbReference type="InterPro" id="IPR043504">
    <property type="entry name" value="Peptidase_S1_PA_chymotrypsin"/>
</dbReference>
<dbReference type="InterPro" id="IPR001676">
    <property type="entry name" value="Picornavirus_capsid"/>
</dbReference>
<dbReference type="InterPro" id="IPR043128">
    <property type="entry name" value="Rev_trsase/Diguanyl_cyclase"/>
</dbReference>
<dbReference type="InterPro" id="IPR033703">
    <property type="entry name" value="Rhv-like"/>
</dbReference>
<dbReference type="InterPro" id="IPR001205">
    <property type="entry name" value="RNA-dir_pol_C"/>
</dbReference>
<dbReference type="InterPro" id="IPR007094">
    <property type="entry name" value="RNA-dir_pol_PSvirus"/>
</dbReference>
<dbReference type="InterPro" id="IPR029053">
    <property type="entry name" value="Viral_coat"/>
</dbReference>
<dbReference type="InterPro" id="IPR037243">
    <property type="entry name" value="Viral_lead_polypep_zc_finger"/>
</dbReference>
<dbReference type="Pfam" id="PF00548">
    <property type="entry name" value="Peptidase_C3"/>
    <property type="match status" value="1"/>
</dbReference>
<dbReference type="Pfam" id="PF00680">
    <property type="entry name" value="RdRP_1"/>
    <property type="match status" value="1"/>
</dbReference>
<dbReference type="Pfam" id="PF00073">
    <property type="entry name" value="Rhv"/>
    <property type="match status" value="2"/>
</dbReference>
<dbReference type="Pfam" id="PF22663">
    <property type="entry name" value="Rhv_5"/>
    <property type="match status" value="1"/>
</dbReference>
<dbReference type="Pfam" id="PF00910">
    <property type="entry name" value="RNA_helicase"/>
    <property type="match status" value="1"/>
</dbReference>
<dbReference type="Pfam" id="PF08935">
    <property type="entry name" value="VP4_2"/>
    <property type="match status" value="1"/>
</dbReference>
<dbReference type="Pfam" id="PF11475">
    <property type="entry name" value="VP_N-CPKC"/>
    <property type="match status" value="1"/>
</dbReference>
<dbReference type="PRINTS" id="PR00918">
    <property type="entry name" value="CALICVIRUSNS"/>
</dbReference>
<dbReference type="SUPFAM" id="SSF56672">
    <property type="entry name" value="DNA/RNA polymerases"/>
    <property type="match status" value="1"/>
</dbReference>
<dbReference type="SUPFAM" id="SSF88633">
    <property type="entry name" value="Positive stranded ssRNA viruses"/>
    <property type="match status" value="2"/>
</dbReference>
<dbReference type="SUPFAM" id="SSF50494">
    <property type="entry name" value="Trypsin-like serine proteases"/>
    <property type="match status" value="1"/>
</dbReference>
<dbReference type="SUPFAM" id="SSF144251">
    <property type="entry name" value="Viral leader polypeptide zinc finger"/>
    <property type="match status" value="1"/>
</dbReference>
<dbReference type="PROSITE" id="PS51874">
    <property type="entry name" value="PCV_3C_PRO"/>
    <property type="match status" value="1"/>
</dbReference>
<dbReference type="PROSITE" id="PS50507">
    <property type="entry name" value="RDRP_SSRNA_POS"/>
    <property type="match status" value="1"/>
</dbReference>
<dbReference type="PROSITE" id="PS51218">
    <property type="entry name" value="SF3_HELICASE_2"/>
    <property type="match status" value="1"/>
</dbReference>
<sequence>MATTMEQEICAHSMTFEECPKCSALQYRNGFYLLKYDEEWYPEELLTDGEDDVFDPDLDMEVVFETQGNSTSSDKNNSSSEGNEGVIINNFYSNQYQNSIDLSANATGSDPPKTYGQFSNLLSGAVNAFSNMLPLLADQNTEEMENLSDRVSQDTAGNTVTNTQSTVGRLVGYGTVHDGEHPASCADTASEKILAVERYYTFKVNDWTSTQKPFEYIRIPLPHVLSGEDGGVFGATLRRHYLVKTGWRVQVQCNASQFHAGSLLVFMAPEYPTLDVFAMDNRWSKDNLPNGTRTQTNRKGPFAMDHQNFWQWTLYPHQFLNLRTNTTVDLEVPYVNIAPTSSWTQHASWTLVIAVVAPLTYSTGASTSLDITASIQPVRPVFNGLRHEVLSRQSPIPVTIREHAGTWYSTLPDSTVPIYGKTPVAPANYMVGEYKDFLEIAQIPTFIGNKVPNAVPYIEASNTAVKTQPLAVYQVTLSCSCLANTFLAALSRNFAQYRGSLVYTFVFTGTAMMKGKFLIAYTPPGAGKPTSRDQAMQATYAIWDLGLNSSYSFTVPFISPTHFRMVGTDQANITNVDGWVTVWQLTPLTYPPGCPTSAKILTMVSAGKDFSLKMPISPAPWSPQGVENAEKGVTENTDATADFVAQPVYLPENQTKVAFFYDRSSPIGAFAVKSGSLESGFAPFSNKACPNSVILTPGPQFDPAYDQLRPQRLTEIWGNGNEETSEVFPLKTKQDYSFCLFSPFVYYKCDLEVTLSPHTSGAHGLLVRWCPTGTPTKPTTQVLHEVSSLSEGRTPQVYSAGPGTSNQISFVVPYNSPLSVLPAVWYNGHKRFDNTGDLGIAPNSDFGTLFFAGTKPDIKFTVYLRYKNMRVFCPRPTVFFPWPTSGDKIDMTPRAGVLMLESPNPLDVSKTYPTLHILLQFNHRGLEARIFRHGQLWAETHAEVVLRSKTKQISFLSNGSYPSMDATTPLNPWKSTYQAVLRAEPHRVTMDVYHKRIRPFRLPLVQKEWRTCEENVFGLYHVFETHYAGYFSDLLIHDVETNPGPFTFKPRQRPVFQTQGAAVSSMAQTLLPNDLASKAMGSAFTALLDANEDAQKAMKIIKTLSSLSDAWENVKGTLNNPEFWKQLLSRCVQLIAGMTIAVMHPDPLTLLCLGVLTAAEITSQTSLCEEIAAKFKTIFTTPPPRFPVISLFQQQSPLKQVNDVFSLAKNLDWAVKTVEKVVDWFGTWVAQEEREQTLDQLLQRFPEHAKRISDLRNGMAAYVECKESFDFFEKLYNQAVKEKRTGIAAVCEKFRQKHDHATARCEPVVIVLRGDAGQGKSLSSQIIAQAVSKTIFGRQSVYSLPPDSDFFDGYENQFAAIMDDLGQNPDGSDFTTFCQMVSTTNLLPNMASLERKGTPFTSQLVVATTNLPEFRPVTIAHYPAVERRITFDYSVSAGPVCSKTEAGCKVLDVERAFRPTGDAPLPCFQNNCLFLEKAGLQFRDNRSKEILSLVDVIERAVTRIERKKKVLTAVQTLVAQGPVDEVSFYSVVQQLKARQEATDEQLEELQEAFARVQERSSVFSDWMKISAMLCAATLALTQVVKMAKAVKQMVRPDLVRVQLDEQEQGPYNETTRIKPKTLQLLDVQGPNPTMDFEKFVAKFVTAPIGFVYPTGVSTQTCLLVKGRTLAVNRHMAESDWTSIVVRGVSHTRSSVKIIAIAKAGKETDVSFIRLSSGPLFRDNTSKFVKASDVLPHSSSPLIGIMNVDIPMMYTGTFLKAGVSVPVETGQTFNHCIHYKANTRKGWCGSAILADLGGSKKILGFHSAGSMGVAAASIISQEMIDAVVQAFEPQGALERLPDGPRIHVPRKTALRPTVARQVFQPAFAPAVLSKFDPRTDADVDEVAFSKHTSNQETLPPVFRMVAREYANRVFALLGRDNGRLSVKQALDGLEGMDPMDKNTSPGLPYTTLGMRRTDVVDWETATLIPFAAERLEKMNNKDFSDIVYQTFLKDELRPIEKVQAAKTRIVDVPPFEHCILGRQLLGKFASKFQTQPGLELGSAIGCDPDVHWTAFGVAMQGFERVYDVDYSNFDSTHSVAVFRLLAEEFFSEENGFDPLVKDYLESLAISKHAYEEKRYLITGGLPSGCAATSMLNTIMNNIIIRAGLYLTYKNFEFDDVKVLSYGDDLLVATNYQLNFDRVRTSLAKTGYKITPANKTSTFPLESTLEDVVFLKRKFKKEGPLYRPVMNREALEAMLSYYRPGTLSEKLTSITMLAVHSGKQEYDRLFAPFREVGVIVPTFESVEYRWRSLFW</sequence>
<name>POLG_ENMGO</name>
<evidence type="ECO:0000250" key="1"/>
<evidence type="ECO:0000250" key="2">
    <source>
        <dbReference type="UniProtKB" id="P03300"/>
    </source>
</evidence>
<evidence type="ECO:0000250" key="3">
    <source>
        <dbReference type="UniProtKB" id="P03304"/>
    </source>
</evidence>
<evidence type="ECO:0000250" key="4">
    <source>
        <dbReference type="UniProtKB" id="P03305"/>
    </source>
</evidence>
<evidence type="ECO:0000250" key="5">
    <source>
        <dbReference type="UniProtKB" id="P08545"/>
    </source>
</evidence>
<evidence type="ECO:0000250" key="6">
    <source>
        <dbReference type="UniProtKB" id="P08617"/>
    </source>
</evidence>
<evidence type="ECO:0000250" key="7">
    <source>
        <dbReference type="UniProtKB" id="Q66282"/>
    </source>
</evidence>
<evidence type="ECO:0000250" key="8">
    <source>
        <dbReference type="UniProtKB" id="Q66765"/>
    </source>
</evidence>
<evidence type="ECO:0000255" key="9"/>
<evidence type="ECO:0000255" key="10">
    <source>
        <dbReference type="PROSITE-ProRule" id="PRU00539"/>
    </source>
</evidence>
<evidence type="ECO:0000255" key="11">
    <source>
        <dbReference type="PROSITE-ProRule" id="PRU00551"/>
    </source>
</evidence>
<evidence type="ECO:0000255" key="12">
    <source>
        <dbReference type="PROSITE-ProRule" id="PRU01222"/>
    </source>
</evidence>
<evidence type="ECO:0000269" key="13">
    <source>
    </source>
</evidence>
<evidence type="ECO:0000269" key="14">
    <source>
    </source>
</evidence>
<evidence type="ECO:0000269" key="15">
    <source>
    </source>
</evidence>
<evidence type="ECO:0000269" key="16">
    <source>
    </source>
</evidence>
<evidence type="ECO:0000269" key="17">
    <source>
    </source>
</evidence>
<evidence type="ECO:0000269" key="18">
    <source>
    </source>
</evidence>
<evidence type="ECO:0000269" key="19">
    <source>
    </source>
</evidence>
<evidence type="ECO:0000269" key="20">
    <source>
    </source>
</evidence>
<evidence type="ECO:0000269" key="21">
    <source>
    </source>
</evidence>
<evidence type="ECO:0000269" key="22">
    <source>
    </source>
</evidence>
<evidence type="ECO:0000305" key="23"/>
<evidence type="ECO:0000305" key="24">
    <source>
    </source>
</evidence>
<evidence type="ECO:0000305" key="25">
    <source>
    </source>
</evidence>
<evidence type="ECO:0007744" key="26">
    <source>
        <dbReference type="PDB" id="1MEC"/>
    </source>
</evidence>
<evidence type="ECO:0007744" key="27">
    <source>
        <dbReference type="PDB" id="2MMH"/>
    </source>
</evidence>
<evidence type="ECO:0007744" key="28">
    <source>
        <dbReference type="PDB" id="2MMI"/>
    </source>
</evidence>
<evidence type="ECO:0007744" key="29">
    <source>
        <dbReference type="PDB" id="2MMK"/>
    </source>
</evidence>
<evidence type="ECO:0007744" key="30">
    <source>
        <dbReference type="PDB" id="2MML"/>
    </source>
</evidence>
<evidence type="ECO:0007744" key="31">
    <source>
        <dbReference type="PDB" id="4NYZ"/>
    </source>
</evidence>
<evidence type="ECO:0007744" key="32">
    <source>
        <dbReference type="PDB" id="4NZ0"/>
    </source>
</evidence>
<evidence type="ECO:0007744" key="33">
    <source>
        <dbReference type="PDB" id="4Y2C"/>
    </source>
</evidence>
<evidence type="ECO:0007744" key="34">
    <source>
        <dbReference type="PDB" id="4Y3C"/>
    </source>
</evidence>
<evidence type="ECO:0007744" key="35">
    <source>
        <dbReference type="PDB" id="7BNY"/>
    </source>
</evidence>
<evidence type="ECO:0007744" key="36">
    <source>
        <dbReference type="PDB" id="7NWT"/>
    </source>
</evidence>
<evidence type="ECO:0007829" key="37">
    <source>
        <dbReference type="PDB" id="1MEC"/>
    </source>
</evidence>
<evidence type="ECO:0007829" key="38">
    <source>
        <dbReference type="PDB" id="2M7Y"/>
    </source>
</evidence>
<evidence type="ECO:0007829" key="39">
    <source>
        <dbReference type="PDB" id="2MEV"/>
    </source>
</evidence>
<evidence type="ECO:0007829" key="40">
    <source>
        <dbReference type="PDB" id="2MMH"/>
    </source>
</evidence>
<evidence type="ECO:0007829" key="41">
    <source>
        <dbReference type="PDB" id="2MMI"/>
    </source>
</evidence>
<evidence type="ECO:0007829" key="42">
    <source>
        <dbReference type="PDB" id="4NYZ"/>
    </source>
</evidence>
<evidence type="ECO:0007829" key="43">
    <source>
        <dbReference type="PDB" id="4NZ0"/>
    </source>
</evidence>
<evidence type="ECO:0007829" key="44">
    <source>
        <dbReference type="PDB" id="7BNY"/>
    </source>
</evidence>
<reference key="1">
    <citation type="journal article" date="2005" name="J. Virol.">
        <title>Dipyridamole reversibly inhibits mengovirus RNA replication.</title>
        <authorList>
            <person name="Fata-Hartley C.L."/>
            <person name="Palmenberg A.C."/>
        </authorList>
    </citation>
    <scope>NUCLEOTIDE SEQUENCE [GENOMIC RNA]</scope>
    <source>
        <strain>Medium plague</strain>
    </source>
</reference>
<reference key="2">
    <citation type="journal article" date="1987" name="Science">
        <title>The atomic structure of Mengo virus at 3.0-A resolution.</title>
        <authorList>
            <person name="Luo M."/>
            <person name="Vriend G."/>
            <person name="Kamer G."/>
            <person name="Minor I."/>
            <person name="Arnold E."/>
            <person name="Rossmann M.G."/>
            <person name="Boege U."/>
            <person name="Scraba D.G."/>
            <person name="Duke G.M."/>
            <person name="Palmenberg A.C."/>
        </authorList>
    </citation>
    <scope>X-RAY CRYSTALLOGRAPHY (3.0 ANGSTROMS) OF 69-901</scope>
    <scope>FUNCTION (CAPSID PROTEIN VP1)</scope>
    <scope>FUNCTION (CAPSID PROTEIN VP2)</scope>
    <scope>FUNCTION (CAPSID PROTEIN VP3)</scope>
    <scope>FUNCTION (CAPSID PROTEIN VP4)</scope>
    <scope>SUBCELLULAR LOCATION (CAPSID PROTEIN VP1)</scope>
    <scope>SUBCELLULAR LOCATION (CAPSID PROTEIN VP2)</scope>
    <scope>SUBCELLULAR LOCATION (CAPSID PROTEIN VP3)</scope>
</reference>
<reference key="3">
    <citation type="journal article" date="1996" name="Virus Genes">
        <title>Mengo virus 3C proteinase: recombinant expression, intergenus substrate cleavage and localization in vivo.</title>
        <authorList>
            <person name="Hall D.J."/>
            <person name="Palmenberg A.C."/>
        </authorList>
    </citation>
    <scope>CATALYTIC ACTIVITY (PROTEASE 3C)</scope>
    <scope>FUNCTION (PROTEASE 3C)</scope>
    <scope>PROTEOLYTIC CLEAVAGE (GENOME POLYPROTEIN)</scope>
    <scope>BIOPHYSICOCHEMICAL PROPERTIES (PROTEASE 3C)</scope>
</reference>
<reference key="4">
    <citation type="journal article" date="2003" name="Virus Res.">
        <title>Encephalomyocarditis viral protein 2A localizes to nucleoli and inhibits cap-dependent mRNA translation.</title>
        <authorList>
            <person name="Aminev A.G."/>
            <person name="Amineva S.P."/>
            <person name="Palmenberg A.C."/>
        </authorList>
    </citation>
    <scope>FUNCTION (PROTEIN 2A)</scope>
    <scope>SUBCELLULAR LOCATION (PROTEIN 2A)</scope>
</reference>
<reference key="5">
    <citation type="journal article" date="2011" name="Proc. Natl. Acad. Sci. U.S.A.">
        <title>Ribosomal frameshifting into an overlapping gene in the 2B-encoding region of the cardiovirus genome.</title>
        <authorList>
            <person name="Loughran G."/>
            <person name="Firth A.E."/>
            <person name="Atkins J.F."/>
        </authorList>
    </citation>
    <scope>RIBOSOMAL FRAMESHIFT</scope>
</reference>
<reference key="6">
    <citation type="journal article" date="2017" name="Nat. Commun.">
        <title>Protein-directed ribosomal frameshifting temporally regulates gene expression.</title>
        <authorList>
            <person name="Napthine S."/>
            <person name="Ling R."/>
            <person name="Finch L.K."/>
            <person name="Jones J.D."/>
            <person name="Bell S."/>
            <person name="Brierley I."/>
            <person name="Firth A.E."/>
        </authorList>
    </citation>
    <scope>FUNCTION (PROTEIN 2A)</scope>
</reference>
<reference key="7">
    <citation type="journal article" date="1990" name="J. Mol. Biol.">
        <title>Structural refinement and analysis of Mengo virus.</title>
        <authorList>
            <person name="Krishnaswamy S."/>
            <person name="Rossmann M.G."/>
        </authorList>
    </citation>
    <scope>X-RAY CRYSTALLOGRAPHY (3.0 ANGSTROMS)</scope>
    <scope>SEQUENCE REVISION TO 451 AND 669</scope>
    <scope>FUNCTION (CAPSID PROTEIN VP1)</scope>
    <scope>FUNCTION (CAPSID PROTEIN VP2)</scope>
    <scope>FUNCTION (CAPSID PROTEIN VP3)</scope>
    <scope>FUNCTION (CAPSID PROTEIN VP4)</scope>
    <scope>SUBCELLULAR LOCATION (CAPSID PROTEIN VP1)</scope>
    <scope>SUBCELLULAR LOCATION (CAPSID PROTEIN VP2)</scope>
    <scope>SUBCELLULAR LOCATION (CAPSID PROTEIN VP3)</scope>
    <scope>DISULFIDE BOND</scope>
</reference>
<reference evidence="26" key="8">
    <citation type="journal article" date="1990" name="Virology">
        <title>Conformational variability of a picornavirus capsid: pH-dependent structural changes of Mengo virus related to its host receptor attachment site and disassembly.</title>
        <authorList>
            <person name="Kim S."/>
            <person name="Boege U."/>
            <person name="Krishnaswamy S."/>
            <person name="Minor I."/>
            <person name="Smith T.J."/>
            <person name="Luo M."/>
            <person name="Scraba D.G."/>
            <person name="Rossmann M.G."/>
        </authorList>
    </citation>
    <scope>X-RAY CRYSTALLOGRAPHY (3.20 ANGSTROMS) OF 625-898; 138-393; 394-624 AND 68-137</scope>
</reference>
<reference evidence="31 32" key="9">
    <citation type="journal article" date="2014" name="J. Virol.">
        <title>The crystal structure of a cardiovirus RNA-dependent RNA polymerase reveals an unusual conformation of the polymerase active site.</title>
        <authorList>
            <person name="Vives-Adrian L."/>
            <person name="Lujan C."/>
            <person name="Oliva B."/>
            <person name="van der Linden L."/>
            <person name="Selisko B."/>
            <person name="Coutard B."/>
            <person name="Canard B."/>
            <person name="van Kuppeveld F.J."/>
            <person name="Ferrer-Orta C."/>
            <person name="Verdaguer N."/>
        </authorList>
    </citation>
    <scope>X-RAY CRYSTALLOGRAPHY (2.15 ANGSTROMS) OF 1834-2293</scope>
    <scope>CATALYTIC ACTIVITY (RNA-DIRECTED RNA POLYMERASE)</scope>
    <scope>FUNCTION (RNA-DIRECTED RNA POLYMERASE)</scope>
    <scope>ACTIVE SITE (RNA-DIRECTED RNA POLYMERASE)</scope>
    <scope>URIDYLYLATION (VPG)</scope>
</reference>
<reference evidence="27 28 29 30" key="10">
    <citation type="journal article" date="2014" name="Proc. Natl. Acad. Sci. U.S.A.">
        <title>Solution structures of Mengovirus Leader protein, its phosphorylated derivatives, and in complex with nuclear transport regulatory protein, RanGTPase.</title>
        <authorList>
            <person name="Bacot-Davis V.R."/>
            <person name="Ciomperlik J.J."/>
            <person name="Basta H.A."/>
            <person name="Cornilescu C.C."/>
            <person name="Palmenberg A.C."/>
        </authorList>
    </citation>
    <scope>STRUCTURE BY NMR OF 1-67</scope>
    <scope>PHOSPHORYLATION AT TYR-41 AND THR-47</scope>
    <scope>ZINC-FINGER</scope>
    <scope>INTERACTION WITH HOST RAN (LEADER PROTEIN)</scope>
</reference>
<reference evidence="33 34" key="11">
    <citation type="journal article" date="2015" name="PLoS Pathog.">
        <title>The RNA template channel of the RNA-dependent RNA polymerase as a target for development of antiviral therapy of multiple genera within a virus family.</title>
        <authorList>
            <person name="van der Linden L."/>
            <person name="Vives-Adrian L."/>
            <person name="Selisko B."/>
            <person name="Ferrer-Orta C."/>
            <person name="Liu X."/>
            <person name="Lanke K."/>
            <person name="Ulferts R."/>
            <person name="De Palma A.M."/>
            <person name="Tanchis F."/>
            <person name="Goris N."/>
            <person name="Lefebvre D."/>
            <person name="De Clercq K."/>
            <person name="Leyssen P."/>
            <person name="Lacroix C."/>
            <person name="Purstinger G."/>
            <person name="Coutard B."/>
            <person name="Canard B."/>
            <person name="Boehr D.D."/>
            <person name="Arnold J.J."/>
            <person name="Cameron C.E."/>
            <person name="Verdaguer N."/>
            <person name="Neyts J."/>
            <person name="van Kuppeveld F.J."/>
        </authorList>
    </citation>
    <scope>X-RAY CRYSTALLOGRAPHY (2.20 ANGSTROMS) OF 1834-2293</scope>
    <scope>ACTIVITY REGULATION (RNA-DIRECTED RNA POLYMERASE)</scope>
</reference>
<reference evidence="35 36" key="12">
    <citation type="journal article" date="2021" name="Nat. Commun.">
        <title>Structural and molecular basis for Cardiovirus 2A protein as a viral gene expression switch.</title>
        <authorList>
            <person name="Hill C.H."/>
            <person name="Pekarek L."/>
            <person name="Napthine S."/>
            <person name="Kibe A."/>
            <person name="Firth A.E."/>
            <person name="Graham S.C."/>
            <person name="Caliskan N."/>
            <person name="Brierley I."/>
        </authorList>
    </citation>
    <scope>X-RAY CRYSTALLOGRAPHY (2.62 ANGSTROMS) OF 902-1044 IN COMPLEX WITH 70S RIBOSOME</scope>
    <scope>RNA-BINDING</scope>
    <scope>FUNCTION</scope>
    <scope>INTERACTION WITH HOST SMALL RIBOSOMAL SUBUNIT</scope>
</reference>
<organismHost>
    <name type="scientific">Homo sapiens</name>
    <name type="common">Human</name>
    <dbReference type="NCBI Taxonomy" id="9606"/>
</organismHost>
<organismHost>
    <name type="scientific">Macaca mulatta</name>
    <name type="common">Rhesus macaque</name>
    <dbReference type="NCBI Taxonomy" id="9544"/>
</organismHost>
<organismHost>
    <name type="scientific">Mus musculus</name>
    <name type="common">Mouse</name>
    <dbReference type="NCBI Taxonomy" id="10090"/>
</organismHost>
<proteinExistence type="evidence at protein level"/>
<feature type="chain" id="PRO_0000446090" description="Genome polyprotein">
    <location>
        <begin position="1"/>
        <end position="2293"/>
    </location>
</feature>
<feature type="chain" id="PRO_5000141082" description="Leader protein">
    <location>
        <begin position="1"/>
        <end position="67"/>
    </location>
</feature>
<feature type="chain" id="PRO_0000310965" description="Capsid protein VP0">
    <location>
        <begin position="68"/>
        <end position="393"/>
    </location>
</feature>
<feature type="chain" id="PRO_5000141083" description="Capsid protein VP4">
    <location>
        <begin position="68"/>
        <end position="137"/>
    </location>
</feature>
<feature type="chain" id="PRO_5000141084" description="Capsid protein VP2">
    <location>
        <begin position="138"/>
        <end position="393"/>
    </location>
</feature>
<feature type="chain" id="PRO_5000141085" description="Capsid protein VP3">
    <location>
        <begin position="394"/>
        <end position="624"/>
    </location>
</feature>
<feature type="chain" id="PRO_5000141086" description="Capsid protein VP1">
    <location>
        <begin position="625"/>
        <end position="901"/>
    </location>
</feature>
<feature type="chain" id="PRO_5000141087" description="Protein 2A">
    <location>
        <begin position="902"/>
        <end position="1044"/>
    </location>
</feature>
<feature type="chain" id="PRO_5000141088" description="Protein 2B">
    <location>
        <begin position="1045"/>
        <end position="1195"/>
    </location>
</feature>
<feature type="chain" id="PRO_5000141089" description="Protein 2C">
    <location>
        <begin position="1196"/>
        <end position="1520"/>
    </location>
</feature>
<feature type="chain" id="PRO_5000141090" description="Protein 3A">
    <location>
        <begin position="1521"/>
        <end position="1608"/>
    </location>
</feature>
<feature type="chain" id="PRO_5000141091" description="VPg">
    <location>
        <begin position="1609"/>
        <end position="1628"/>
    </location>
</feature>
<feature type="chain" id="PRO_5000141092" description="Protease 3C">
    <location>
        <begin position="1629"/>
        <end position="1833"/>
    </location>
</feature>
<feature type="chain" id="PRO_5000141093" description="RNA-directed RNA polymerase">
    <location>
        <begin position="1834"/>
        <end position="2293"/>
    </location>
</feature>
<feature type="domain" description="SF3 helicase" evidence="11">
    <location>
        <begin position="1282"/>
        <end position="1448"/>
    </location>
</feature>
<feature type="domain" description="Peptidase C3" evidence="12">
    <location>
        <begin position="1631"/>
        <end position="1823"/>
    </location>
</feature>
<feature type="domain" description="RdRp catalytic" evidence="10">
    <location>
        <begin position="2062"/>
        <end position="2180"/>
    </location>
</feature>
<feature type="zinc finger region" evidence="17">
    <location>
        <begin position="10"/>
        <end position="22"/>
    </location>
</feature>
<feature type="region of interest" description="Acidic" evidence="23">
    <location>
        <begin position="37"/>
        <end position="61"/>
    </location>
</feature>
<feature type="region of interest" description="Host EIF4E binding" evidence="8">
    <location>
        <begin position="1030"/>
        <end position="1036"/>
    </location>
</feature>
<feature type="short sequence motif" description="Nuclear localization signal" evidence="8">
    <location>
        <begin position="995"/>
        <end position="1003"/>
    </location>
</feature>
<feature type="active site" description="For protease 3C activity" evidence="12">
    <location>
        <position position="1674"/>
    </location>
</feature>
<feature type="active site" description="For protease 3C activity" evidence="12">
    <location>
        <position position="1708"/>
    </location>
</feature>
<feature type="active site" description="For protease 3C activity" evidence="12">
    <location>
        <position position="1787"/>
    </location>
</feature>
<feature type="active site" description="For RdRp activity" evidence="16">
    <location>
        <position position="2068"/>
    </location>
</feature>
<feature type="active site" description="For RdRp activity" evidence="16">
    <location>
        <position position="2166"/>
    </location>
</feature>
<feature type="binding site" evidence="21">
    <location>
        <position position="22"/>
    </location>
    <ligand>
        <name>RNA</name>
        <dbReference type="ChEBI" id="CHEBI:33697"/>
    </ligand>
</feature>
<feature type="binding site" evidence="21">
    <location>
        <position position="46"/>
    </location>
    <ligand>
        <name>RNA</name>
        <dbReference type="ChEBI" id="CHEBI:33697"/>
    </ligand>
</feature>
<feature type="binding site" evidence="21">
    <location>
        <position position="47"/>
    </location>
    <ligand>
        <name>RNA</name>
        <dbReference type="ChEBI" id="CHEBI:33697"/>
    </ligand>
</feature>
<feature type="binding site" evidence="21">
    <location>
        <position position="48"/>
    </location>
    <ligand>
        <name>RNA</name>
        <dbReference type="ChEBI" id="CHEBI:33697"/>
    </ligand>
</feature>
<feature type="binding site" evidence="21">
    <location>
        <position position="49"/>
    </location>
    <ligand>
        <name>RNA</name>
        <dbReference type="ChEBI" id="CHEBI:33697"/>
    </ligand>
</feature>
<feature type="binding site" evidence="21">
    <location>
        <position position="50"/>
    </location>
    <ligand>
        <name>RNA</name>
        <dbReference type="ChEBI" id="CHEBI:33697"/>
    </ligand>
</feature>
<feature type="binding site" evidence="21">
    <location>
        <position position="69"/>
    </location>
    <ligand>
        <name>RNA</name>
        <dbReference type="ChEBI" id="CHEBI:33697"/>
    </ligand>
</feature>
<feature type="binding site" evidence="21">
    <location>
        <position position="70"/>
    </location>
    <ligand>
        <name>RNA</name>
        <dbReference type="ChEBI" id="CHEBI:33697"/>
    </ligand>
</feature>
<feature type="binding site" evidence="21">
    <location>
        <position position="93"/>
    </location>
    <ligand>
        <name>RNA</name>
        <dbReference type="ChEBI" id="CHEBI:33697"/>
    </ligand>
</feature>
<feature type="binding site" evidence="21">
    <location>
        <position position="95"/>
    </location>
    <ligand>
        <name>RNA</name>
        <dbReference type="ChEBI" id="CHEBI:33697"/>
    </ligand>
</feature>
<feature type="binding site" evidence="21">
    <location>
        <position position="97"/>
    </location>
    <ligand>
        <name>RNA</name>
        <dbReference type="ChEBI" id="CHEBI:33697"/>
    </ligand>
</feature>
<feature type="binding site" evidence="21">
    <location>
        <position position="100"/>
    </location>
    <ligand>
        <name>RNA</name>
        <dbReference type="ChEBI" id="CHEBI:33697"/>
    </ligand>
</feature>
<feature type="binding site" evidence="11">
    <location>
        <begin position="1314"/>
        <end position="1321"/>
    </location>
    <ligand>
        <name>ATP</name>
        <dbReference type="ChEBI" id="CHEBI:30616"/>
    </ligand>
</feature>
<feature type="site" description="Cleavage" evidence="9">
    <location>
        <begin position="137"/>
        <end position="138"/>
    </location>
</feature>
<feature type="site" description="Cleavage; by protease 3C" evidence="3">
    <location>
        <begin position="393"/>
        <end position="394"/>
    </location>
</feature>
<feature type="site" description="Cleavage; by protease 3C" evidence="3">
    <location>
        <begin position="624"/>
        <end position="625"/>
    </location>
</feature>
<feature type="site" description="Cleavage; by protease 3C" evidence="3">
    <location>
        <begin position="901"/>
        <end position="902"/>
    </location>
</feature>
<feature type="site" description="Cleavage; by ribosomal skip" evidence="3">
    <location>
        <begin position="1044"/>
        <end position="1045"/>
    </location>
</feature>
<feature type="site" description="Cleavage; by protease 3C" evidence="3">
    <location>
        <begin position="1195"/>
        <end position="1196"/>
    </location>
</feature>
<feature type="site" description="Cleavage; by protease 3C" evidence="3">
    <location>
        <begin position="1520"/>
        <end position="1521"/>
    </location>
</feature>
<feature type="site" description="Cleavage; by protease 3C" evidence="3">
    <location>
        <begin position="1608"/>
        <end position="1609"/>
    </location>
</feature>
<feature type="site" description="Cleavage; by protease 3C" evidence="3">
    <location>
        <begin position="1628"/>
        <end position="1629"/>
    </location>
</feature>
<feature type="site" description="Cleavage; by protease 3C" evidence="3">
    <location>
        <begin position="1833"/>
        <end position="1834"/>
    </location>
</feature>
<feature type="modified residue" description="Phosphotyrosine; by host SYK" evidence="17">
    <location>
        <position position="41"/>
    </location>
</feature>
<feature type="modified residue" description="Phosphothreonine; by host CK2" evidence="17">
    <location>
        <position position="47"/>
    </location>
</feature>
<feature type="modified residue" description="O-(5'-phospho-RNA)-tyrosine" evidence="2">
    <location>
        <position position="1611"/>
    </location>
</feature>
<feature type="lipid moiety-binding region" description="N-myristoyl glycine; by host" evidence="7">
    <location>
        <position position="68"/>
    </location>
</feature>
<feature type="disulfide bond" evidence="14">
    <location>
        <begin position="479"/>
        <end position="481"/>
    </location>
</feature>
<feature type="helix" evidence="40">
    <location>
        <begin position="1"/>
        <end position="3"/>
    </location>
</feature>
<feature type="strand" evidence="38">
    <location>
        <begin position="8"/>
        <end position="10"/>
    </location>
</feature>
<feature type="turn" evidence="38">
    <location>
        <begin position="11"/>
        <end position="13"/>
    </location>
</feature>
<feature type="helix" evidence="38">
    <location>
        <begin position="16"/>
        <end position="18"/>
    </location>
</feature>
<feature type="helix" evidence="38">
    <location>
        <begin position="20"/>
        <end position="24"/>
    </location>
</feature>
<feature type="turn" evidence="41">
    <location>
        <begin position="26"/>
        <end position="30"/>
    </location>
</feature>
<feature type="strand" evidence="38">
    <location>
        <begin position="32"/>
        <end position="34"/>
    </location>
</feature>
<feature type="strand" evidence="40">
    <location>
        <begin position="36"/>
        <end position="40"/>
    </location>
</feature>
<feature type="helix" evidence="40">
    <location>
        <begin position="41"/>
        <end position="45"/>
    </location>
</feature>
<feature type="strand" evidence="38">
    <location>
        <begin position="46"/>
        <end position="48"/>
    </location>
</feature>
<feature type="turn" evidence="41">
    <location>
        <begin position="54"/>
        <end position="57"/>
    </location>
</feature>
<feature type="strand" evidence="38">
    <location>
        <begin position="60"/>
        <end position="62"/>
    </location>
</feature>
<feature type="turn" evidence="38">
    <location>
        <begin position="63"/>
        <end position="65"/>
    </location>
</feature>
<feature type="strand" evidence="37">
    <location>
        <begin position="78"/>
        <end position="80"/>
    </location>
</feature>
<feature type="helix" evidence="39">
    <location>
        <begin position="94"/>
        <end position="97"/>
    </location>
</feature>
<feature type="strand" evidence="39">
    <location>
        <begin position="115"/>
        <end position="117"/>
    </location>
</feature>
<feature type="strand" evidence="37">
    <location>
        <begin position="124"/>
        <end position="126"/>
    </location>
</feature>
<feature type="strand" evidence="39">
    <location>
        <begin position="133"/>
        <end position="135"/>
    </location>
</feature>
<feature type="helix" evidence="37">
    <location>
        <begin position="148"/>
        <end position="150"/>
    </location>
</feature>
<feature type="strand" evidence="39">
    <location>
        <begin position="152"/>
        <end position="155"/>
    </location>
</feature>
<feature type="strand" evidence="39">
    <location>
        <begin position="160"/>
        <end position="165"/>
    </location>
</feature>
<feature type="strand" evidence="39">
    <location>
        <begin position="169"/>
        <end position="171"/>
    </location>
</feature>
<feature type="helix" evidence="39">
    <location>
        <begin position="172"/>
        <end position="174"/>
    </location>
</feature>
<feature type="helix" evidence="39">
    <location>
        <begin position="194"/>
        <end position="196"/>
    </location>
</feature>
<feature type="strand" evidence="39">
    <location>
        <begin position="200"/>
        <end position="208"/>
    </location>
</feature>
<feature type="strand" evidence="39">
    <location>
        <begin position="216"/>
        <end position="221"/>
    </location>
</feature>
<feature type="helix" evidence="39">
    <location>
        <begin position="223"/>
        <end position="225"/>
    </location>
</feature>
<feature type="helix" evidence="39">
    <location>
        <begin position="228"/>
        <end position="230"/>
    </location>
</feature>
<feature type="helix" evidence="39">
    <location>
        <begin position="231"/>
        <end position="237"/>
    </location>
</feature>
<feature type="strand" evidence="39">
    <location>
        <begin position="240"/>
        <end position="252"/>
    </location>
</feature>
<feature type="strand" evidence="39">
    <location>
        <begin position="260"/>
        <end position="269"/>
    </location>
</feature>
<feature type="turn" evidence="39">
    <location>
        <begin position="286"/>
        <end position="290"/>
    </location>
</feature>
<feature type="helix" evidence="39">
    <location>
        <begin position="309"/>
        <end position="314"/>
    </location>
</feature>
<feature type="strand" evidence="39">
    <location>
        <begin position="315"/>
        <end position="321"/>
    </location>
</feature>
<feature type="turn" evidence="39">
    <location>
        <begin position="322"/>
        <end position="324"/>
    </location>
</feature>
<feature type="strand" evidence="39">
    <location>
        <begin position="326"/>
        <end position="332"/>
    </location>
</feature>
<feature type="strand" evidence="39">
    <location>
        <begin position="337"/>
        <end position="341"/>
    </location>
</feature>
<feature type="helix" evidence="39">
    <location>
        <begin position="343"/>
        <end position="345"/>
    </location>
</feature>
<feature type="strand" evidence="39">
    <location>
        <begin position="349"/>
        <end position="360"/>
    </location>
</feature>
<feature type="strand" evidence="39">
    <location>
        <begin position="368"/>
        <end position="385"/>
    </location>
</feature>
<feature type="turn" evidence="39">
    <location>
        <begin position="402"/>
        <end position="405"/>
    </location>
</feature>
<feature type="helix" evidence="39">
    <location>
        <begin position="437"/>
        <end position="439"/>
    </location>
</feature>
<feature type="turn" evidence="39">
    <location>
        <begin position="440"/>
        <end position="442"/>
    </location>
</feature>
<feature type="strand" evidence="39">
    <location>
        <begin position="455"/>
        <end position="460"/>
    </location>
</feature>
<feature type="strand" evidence="37">
    <location>
        <begin position="466"/>
        <end position="468"/>
    </location>
</feature>
<feature type="strand" evidence="39">
    <location>
        <begin position="470"/>
        <end position="476"/>
    </location>
</feature>
<feature type="helix" evidence="39">
    <location>
        <begin position="480"/>
        <end position="482"/>
    </location>
</feature>
<feature type="helix" evidence="39">
    <location>
        <begin position="486"/>
        <end position="491"/>
    </location>
</feature>
<feature type="strand" evidence="39">
    <location>
        <begin position="494"/>
        <end position="499"/>
    </location>
</feature>
<feature type="strand" evidence="39">
    <location>
        <begin position="501"/>
        <end position="507"/>
    </location>
</feature>
<feature type="strand" evidence="39">
    <location>
        <begin position="514"/>
        <end position="522"/>
    </location>
</feature>
<feature type="strand" evidence="39">
    <location>
        <begin position="524"/>
        <end position="526"/>
    </location>
</feature>
<feature type="helix" evidence="39">
    <location>
        <begin position="532"/>
        <end position="535"/>
    </location>
</feature>
<feature type="strand" evidence="39">
    <location>
        <begin position="538"/>
        <end position="544"/>
    </location>
</feature>
<feature type="strand" evidence="39">
    <location>
        <begin position="546"/>
        <end position="548"/>
    </location>
</feature>
<feature type="strand" evidence="39">
    <location>
        <begin position="550"/>
        <end position="555"/>
    </location>
</feature>
<feature type="strand" evidence="39">
    <location>
        <begin position="560"/>
        <end position="567"/>
    </location>
</feature>
<feature type="turn" evidence="37">
    <location>
        <begin position="573"/>
        <end position="575"/>
    </location>
</feature>
<feature type="strand" evidence="39">
    <location>
        <begin position="579"/>
        <end position="589"/>
    </location>
</feature>
<feature type="strand" evidence="39">
    <location>
        <begin position="598"/>
        <end position="606"/>
    </location>
</feature>
<feature type="strand" evidence="39">
    <location>
        <begin position="611"/>
        <end position="615"/>
    </location>
</feature>
<feature type="helix" evidence="39">
    <location>
        <begin position="629"/>
        <end position="631"/>
    </location>
</feature>
<feature type="turn" evidence="39">
    <location>
        <begin position="639"/>
        <end position="642"/>
    </location>
</feature>
<feature type="strand" evidence="37">
    <location>
        <begin position="654"/>
        <end position="656"/>
    </location>
</feature>
<feature type="helix" evidence="39">
    <location>
        <begin position="657"/>
        <end position="661"/>
    </location>
</feature>
<feature type="strand" evidence="39">
    <location>
        <begin position="665"/>
        <end position="670"/>
    </location>
</feature>
<feature type="helix" evidence="39">
    <location>
        <begin position="676"/>
        <end position="678"/>
    </location>
</feature>
<feature type="strand" evidence="39">
    <location>
        <begin position="685"/>
        <end position="688"/>
    </location>
</feature>
<feature type="strand" evidence="39">
    <location>
        <begin position="690"/>
        <end position="694"/>
    </location>
</feature>
<feature type="helix" evidence="39">
    <location>
        <begin position="703"/>
        <end position="705"/>
    </location>
</feature>
<feature type="strand" evidence="39">
    <location>
        <begin position="727"/>
        <end position="729"/>
    </location>
</feature>
<feature type="strand" evidence="39">
    <location>
        <begin position="731"/>
        <end position="733"/>
    </location>
</feature>
<feature type="helix" evidence="39">
    <location>
        <begin position="736"/>
        <end position="740"/>
    </location>
</feature>
<feature type="strand" evidence="39">
    <location>
        <begin position="745"/>
        <end position="758"/>
    </location>
</feature>
<feature type="strand" evidence="39">
    <location>
        <begin position="765"/>
        <end position="770"/>
    </location>
</feature>
<feature type="strand" evidence="39">
    <location>
        <begin position="788"/>
        <end position="790"/>
    </location>
</feature>
<feature type="strand" evidence="39">
    <location>
        <begin position="792"/>
        <end position="794"/>
    </location>
</feature>
<feature type="strand" evidence="39">
    <location>
        <begin position="796"/>
        <end position="799"/>
    </location>
</feature>
<feature type="strand" evidence="39">
    <location>
        <begin position="808"/>
        <end position="812"/>
    </location>
</feature>
<feature type="strand" evidence="39">
    <location>
        <begin position="817"/>
        <end position="824"/>
    </location>
</feature>
<feature type="strand" evidence="39">
    <location>
        <begin position="848"/>
        <end position="854"/>
    </location>
</feature>
<feature type="strand" evidence="39">
    <location>
        <begin position="860"/>
        <end position="873"/>
    </location>
</feature>
<feature type="strand" evidence="37">
    <location>
        <begin position="894"/>
        <end position="896"/>
    </location>
</feature>
<feature type="strand" evidence="44">
    <location>
        <begin position="914"/>
        <end position="922"/>
    </location>
</feature>
<feature type="strand" evidence="44">
    <location>
        <begin position="925"/>
        <end position="932"/>
    </location>
</feature>
<feature type="strand" evidence="44">
    <location>
        <begin position="935"/>
        <end position="942"/>
    </location>
</feature>
<feature type="helix" evidence="44">
    <location>
        <begin position="949"/>
        <end position="958"/>
    </location>
</feature>
<feature type="strand" evidence="44">
    <location>
        <begin position="974"/>
        <end position="983"/>
    </location>
</feature>
<feature type="strand" evidence="44">
    <location>
        <begin position="988"/>
        <end position="996"/>
    </location>
</feature>
<feature type="strand" evidence="44">
    <location>
        <begin position="1004"/>
        <end position="1010"/>
    </location>
</feature>
<feature type="helix" evidence="44">
    <location>
        <begin position="1016"/>
        <end position="1026"/>
    </location>
</feature>
<feature type="turn" evidence="44">
    <location>
        <begin position="1027"/>
        <end position="1030"/>
    </location>
</feature>
<feature type="strand" evidence="42">
    <location>
        <begin position="1836"/>
        <end position="1838"/>
    </location>
</feature>
<feature type="helix" evidence="42">
    <location>
        <begin position="1859"/>
        <end position="1862"/>
    </location>
</feature>
<feature type="strand" evidence="42">
    <location>
        <begin position="1865"/>
        <end position="1868"/>
    </location>
</feature>
<feature type="helix" evidence="42">
    <location>
        <begin position="1882"/>
        <end position="1885"/>
    </location>
</feature>
<feature type="helix" evidence="42">
    <location>
        <begin position="1886"/>
        <end position="1890"/>
    </location>
</feature>
<feature type="helix" evidence="42">
    <location>
        <begin position="1899"/>
        <end position="1916"/>
    </location>
</feature>
<feature type="helix" evidence="42">
    <location>
        <begin position="1925"/>
        <end position="1930"/>
    </location>
</feature>
<feature type="strand" evidence="42">
    <location>
        <begin position="1933"/>
        <end position="1935"/>
    </location>
</feature>
<feature type="strand" evidence="42">
    <location>
        <begin position="1940"/>
        <end position="1942"/>
    </location>
</feature>
<feature type="turn" evidence="42">
    <location>
        <begin position="1946"/>
        <end position="1952"/>
    </location>
</feature>
<feature type="helix" evidence="42">
    <location>
        <begin position="1955"/>
        <end position="1958"/>
    </location>
</feature>
<feature type="turn" evidence="42">
    <location>
        <begin position="1961"/>
        <end position="1964"/>
    </location>
</feature>
<feature type="helix" evidence="42">
    <location>
        <begin position="1968"/>
        <end position="1978"/>
    </location>
</feature>
<feature type="strand" evidence="42">
    <location>
        <begin position="1987"/>
        <end position="1991"/>
    </location>
</feature>
<feature type="strand" evidence="42">
    <location>
        <begin position="1994"/>
        <end position="1997"/>
    </location>
</feature>
<feature type="helix" evidence="42">
    <location>
        <begin position="1998"/>
        <end position="2002"/>
    </location>
</feature>
<feature type="strand" evidence="42">
    <location>
        <begin position="2008"/>
        <end position="2011"/>
    </location>
</feature>
<feature type="helix" evidence="42">
    <location>
        <begin position="2014"/>
        <end position="2031"/>
    </location>
</feature>
<feature type="turn" evidence="42">
    <location>
        <begin position="2037"/>
        <end position="2040"/>
    </location>
</feature>
<feature type="helix" evidence="42">
    <location>
        <begin position="2047"/>
        <end position="2058"/>
    </location>
</feature>
<feature type="strand" evidence="42">
    <location>
        <begin position="2061"/>
        <end position="2068"/>
    </location>
</feature>
<feature type="turn" evidence="43">
    <location>
        <begin position="2072"/>
        <end position="2075"/>
    </location>
</feature>
<feature type="helix" evidence="42">
    <location>
        <begin position="2078"/>
        <end position="2087"/>
    </location>
</feature>
<feature type="helix" evidence="42">
    <location>
        <begin position="2091"/>
        <end position="2093"/>
    </location>
</feature>
<feature type="helix" evidence="42">
    <location>
        <begin position="2099"/>
        <end position="2107"/>
    </location>
</feature>
<feature type="strand" evidence="42">
    <location>
        <begin position="2108"/>
        <end position="2113"/>
    </location>
</feature>
<feature type="strand" evidence="42">
    <location>
        <begin position="2116"/>
        <end position="2122"/>
    </location>
</feature>
<feature type="strand" evidence="42">
    <location>
        <begin position="2126"/>
        <end position="2128"/>
    </location>
</feature>
<feature type="helix" evidence="42">
    <location>
        <begin position="2131"/>
        <end position="2150"/>
    </location>
</feature>
<feature type="helix" evidence="42">
    <location>
        <begin position="2156"/>
        <end position="2158"/>
    </location>
</feature>
<feature type="strand" evidence="42">
    <location>
        <begin position="2160"/>
        <end position="2164"/>
    </location>
</feature>
<feature type="strand" evidence="42">
    <location>
        <begin position="2167"/>
        <end position="2174"/>
    </location>
</feature>
<feature type="helix" evidence="42">
    <location>
        <begin position="2178"/>
        <end position="2186"/>
    </location>
</feature>
<feature type="turn" evidence="42">
    <location>
        <begin position="2187"/>
        <end position="2189"/>
    </location>
</feature>
<feature type="strand" evidence="42">
    <location>
        <begin position="2195"/>
        <end position="2197"/>
    </location>
</feature>
<feature type="turn" evidence="42">
    <location>
        <begin position="2207"/>
        <end position="2209"/>
    </location>
</feature>
<feature type="strand" evidence="42">
    <location>
        <begin position="2215"/>
        <end position="2220"/>
    </location>
</feature>
<feature type="strand" evidence="42">
    <location>
        <begin position="2223"/>
        <end position="2228"/>
    </location>
</feature>
<feature type="helix" evidence="42">
    <location>
        <begin position="2230"/>
        <end position="2238"/>
    </location>
</feature>
<feature type="helix" evidence="42">
    <location>
        <begin position="2245"/>
        <end position="2256"/>
    </location>
</feature>
<feature type="helix" evidence="42">
    <location>
        <begin position="2257"/>
        <end position="2259"/>
    </location>
</feature>
<feature type="helix" evidence="42">
    <location>
        <begin position="2261"/>
        <end position="2273"/>
    </location>
</feature>
<feature type="helix" evidence="42">
    <location>
        <begin position="2281"/>
        <end position="2290"/>
    </location>
</feature>
<organism>
    <name type="scientific">Mengo encephalomyocarditis virus</name>
    <dbReference type="NCBI Taxonomy" id="12107"/>
    <lineage>
        <taxon>Viruses</taxon>
        <taxon>Riboviria</taxon>
        <taxon>Orthornavirae</taxon>
        <taxon>Pisuviricota</taxon>
        <taxon>Pisoniviricetes</taxon>
        <taxon>Picornavirales</taxon>
        <taxon>Picornaviridae</taxon>
        <taxon>Caphthovirinae</taxon>
        <taxon>Cardiovirus</taxon>
        <taxon>Cardiovirus A</taxon>
    </lineage>
</organism>
<comment type="function">
    <molecule>Leader protein</molecule>
    <text evidence="8">Forms a complex with host RAN and probably binds to exportins carrying activated MAPK in order to mediate the hyperphosphorylation of host Phe/Gly containing nuclear pore proteins (Nups) resulting in cessation of active nucleocytoplasmic transport (By similarity). Proteins with NLS signals fail to import, cellular mRNAs fail to export, and some proteins small enough for diffusion are not retained anymore (efflux) (By similarity). The resulting inhibition of cellular protein synthesis serves to ensure maximal viral gene expression and to evade host immune response (By similarity).</text>
</comment>
<comment type="function">
    <molecule>Capsid protein VP1</molecule>
    <text evidence="14 20">Forms an icosahedral capsid of pseudo T=3 symmetry with capsid proteins VP2 and VP3. Together they form an icosahedral capsid composed of 60 copies of each VP1, VP2, and VP3, with a diameter of approximately 300 Angstroms. VP4 lies on the inner surface of the protein shell formed by VP1, VP2 and VP3. All the three latter proteins contain a beta-sheet structure called beta-barrel jelly roll. VP1 is situated at the 12 fivefold axes, whereas VP2 and VP3 are located at the quasi-sixfold axes.</text>
</comment>
<comment type="function">
    <molecule>Capsid protein VP2</molecule>
    <text evidence="14 20">Forms an icosahedral capsid of pseudo T=3 symmetry with capsid proteins VP2 and VP3. Together they form an icosahedral capsid composed of 60 copies of each VP1, VP2, and VP3, with a diameter of approximately 300 Angstroms. VP4 lies on the inner surface of the protein shell formed by VP1, VP2 and VP3. All the three latter proteins contain a beta-sheet structure called beta-barrel jelly roll. VP1 is situated at the 12 fivefold axes, whereas VP2 and VP3 are located at the quasi-sixfold axes.</text>
</comment>
<comment type="function">
    <molecule>Capsid protein VP3</molecule>
    <text evidence="14 20">Forms an icosahedral capsid of pseudo T=3 symmetry with capsid proteins VP2 and VP3. Together they form an icosahedral capsid composed of 60 copies of each VP1, VP2, and VP3, with a diameter of approximately 300 Angstroms. VP4 lies on the inner surface of the protein shell formed by VP1, VP2 and VP3. All the three latter proteins contain a beta-sheet structure called beta-barrel jelly roll. VP1 is situated at the 12 fivefold axes, whereas VP2 and VP3 are located at the quasi-sixfold axes.</text>
</comment>
<comment type="function">
    <molecule>Capsid protein VP4</molecule>
    <text evidence="2 14 20">Lies on the inner surface of the capsid shell (PubMed:2156078, PubMed:3026048). After binding to the host receptor, the capsid undergoes conformational changes (By similarity). Capsid protein VP4 is released, capsid protein VP1 N-terminus is externalized, and together, they shape a pore in the host membrane through which the viral genome is translocated into the host cell cytoplasm (By similarity). After genome has been released, the channel shrinks (By similarity).</text>
</comment>
<comment type="function">
    <molecule>Capsid protein VP0</molecule>
    <text evidence="6">VP0 precursor is a component of immature procapsids.</text>
</comment>
<comment type="function">
    <molecule>Protein 2A</molecule>
    <text evidence="8 13 19 21">Involved in host translation shutoff by inhibiting cap-dependent mRNA translation (PubMed:12921995). Nuclear localization is required for this function (By similarity). The resulting inhibition of cellular protein synthesis serves to ensure maximal viral gene expression and to evade host immune response (By similarity). Inhibits the phosphorylation of the leader protein (By similarity). Binds to the RNA stem-loop essential for the ribosomal frameshift event and trans-activates the production of protein 2B* (PubMed:28593994, PubMed:34887415).</text>
</comment>
<comment type="function">
    <molecule>Protein 2B</molecule>
    <text evidence="1">Affects membrane integrity and causes an increase in membrane permeability.</text>
</comment>
<comment type="function">
    <molecule>Protein 2C</molecule>
    <text evidence="3 4 5">Associates with and induces structural rearrangements of intracellular membranes (By similarity). It displays RNA-binding, nucleotide binding and NTPase activities (By similarity). Interacts with IFIH1/MDA5 to inhibit the induction of the IFN-beta signal pathway (By similarity).</text>
</comment>
<comment type="function">
    <molecule>Protein 3A</molecule>
    <text evidence="1">Serves as membrane anchor via its hydrophobic domain.</text>
</comment>
<comment type="function">
    <molecule>VPg</molecule>
    <text evidence="3">Forms a primer, VPg-pU, which is utilized by the polymerase for the initiation of RNA chains.</text>
</comment>
<comment type="function">
    <molecule>Protease 3C</molecule>
    <text evidence="3 22">Cysteine protease that generates mature viral proteins from the precursor polyprotein (PubMed:8972564). In addition to its proteolytic activity, it binds to viral RNA, and thus influences viral genome replication. RNA and substrate cooperatively bind to the protease. Cleaves host PABP1, this cleavage is important for viral replication (By similarity). Cleaves host TANK and disrupts the TANK-TBK1-IKKepsilon-IRF3 complex, thereby inhibiting the induction of the IFN-beta signal pathway (By similarity).</text>
</comment>
<comment type="function">
    <molecule>RNA-directed RNA polymerase</molecule>
    <text evidence="16 24">Replicates the genomic and antigenomic RNAs by recognizing replications specific signals (Probable). Performs VPg uridylylation (PubMed:24600002).</text>
</comment>
<comment type="catalytic activity">
    <reaction evidence="10 16">
        <text>RNA(n) + a ribonucleoside 5'-triphosphate = RNA(n+1) + diphosphate</text>
        <dbReference type="Rhea" id="RHEA:21248"/>
        <dbReference type="Rhea" id="RHEA-COMP:14527"/>
        <dbReference type="Rhea" id="RHEA-COMP:17342"/>
        <dbReference type="ChEBI" id="CHEBI:33019"/>
        <dbReference type="ChEBI" id="CHEBI:61557"/>
        <dbReference type="ChEBI" id="CHEBI:140395"/>
        <dbReference type="EC" id="2.7.7.48"/>
    </reaction>
</comment>
<comment type="catalytic activity">
    <reaction evidence="23">
        <text>ATP + H2O = ADP + phosphate + H(+)</text>
        <dbReference type="Rhea" id="RHEA:13065"/>
        <dbReference type="ChEBI" id="CHEBI:15377"/>
        <dbReference type="ChEBI" id="CHEBI:15378"/>
        <dbReference type="ChEBI" id="CHEBI:30616"/>
        <dbReference type="ChEBI" id="CHEBI:43474"/>
        <dbReference type="ChEBI" id="CHEBI:456216"/>
        <dbReference type="EC" id="3.6.4.13"/>
    </reaction>
</comment>
<comment type="catalytic activity">
    <reaction evidence="12 22">
        <text>Selective cleavage of Gln-|-Gly bond in the poliovirus polyprotein. In other picornavirus reactions Glu may be substituted for Gln, and Ser or Thr for Gly.</text>
        <dbReference type="EC" id="3.4.22.28"/>
    </reaction>
</comment>
<comment type="activity regulation">
    <text evidence="18">RNA-dependent RNA polymerase: Inhibited by GPC-N114.</text>
</comment>
<comment type="biophysicochemical properties">
    <phDependence>
        <text evidence="22">Optimum pH is 8.0 for protease 3C.</text>
    </phDependence>
    <temperatureDependence>
        <text evidence="22">Optimum temperature is 37 degrees Celsius for protease 3C.</text>
    </temperatureDependence>
</comment>
<comment type="subunit">
    <molecule>Protease 3C</molecule>
    <text evidence="8">Interacts with host TRIM22; this interaction leads to the ubiquitination of protease 3C and may restrict the virus replication (By similarity).</text>
</comment>
<comment type="subunit">
    <molecule>Protein 2A</molecule>
    <text evidence="8 21">Interacts with host EIF4E (By similarity). Interacts with the leader protein (By similarity). Interacts with the host small ribosomal subunit (PubMed:34887415).</text>
</comment>
<comment type="subunit">
    <molecule>Leader protein</molecule>
    <text evidence="3 8 17 25">Interacts with host RAN; the complex L-RAN recruits cellular kinases responsible for the L-induced nucleocytoplasmic trafficking inhibition (PubMed:25331866). The complex L-RAN can further bind to the host exportins XPO1/CRM1 and CSE1L/CAS (Probable). Interacts with the protein 2A (By similarity).</text>
</comment>
<comment type="subunit">
    <molecule>Protein 2C</molecule>
    <text evidence="8">Interacts with host IFIH1/MDA5; this interaction inhibits the induction of the IFN-beta signal pathway (By similarity).</text>
</comment>
<comment type="subcellular location">
    <molecule>Capsid protein VP2</molecule>
    <subcellularLocation>
        <location evidence="14 20">Virion</location>
    </subcellularLocation>
    <subcellularLocation>
        <location evidence="23">Host cytoplasm</location>
    </subcellularLocation>
</comment>
<comment type="subcellular location">
    <molecule>Capsid protein VP3</molecule>
    <subcellularLocation>
        <location evidence="14 20">Virion</location>
    </subcellularLocation>
    <subcellularLocation>
        <location evidence="23">Host cytoplasm</location>
    </subcellularLocation>
</comment>
<comment type="subcellular location">
    <molecule>Capsid protein VP1</molecule>
    <subcellularLocation>
        <location evidence="14 20">Virion</location>
    </subcellularLocation>
    <subcellularLocation>
        <location evidence="23">Host cytoplasm</location>
    </subcellularLocation>
</comment>
<comment type="subcellular location">
    <molecule>Protein 2A</molecule>
    <subcellularLocation>
        <location evidence="13">Host nucleus</location>
        <location evidence="13">Host nucleolus</location>
    </subcellularLocation>
</comment>
<comment type="subcellular location">
    <molecule>Protein 2B</molecule>
    <subcellularLocation>
        <location evidence="23">Host cytoplasmic vesicle membrane</location>
        <topology evidence="23">Peripheral membrane protein</topology>
        <orientation evidence="23">Cytoplasmic side</orientation>
    </subcellularLocation>
    <text evidence="23">Probably localizes to the surface of intracellular membrane vesicles that are induced after virus infection as the site for viral RNA replication. These vesicles are probably autophagosome-like vesicles.</text>
</comment>
<comment type="subcellular location">
    <molecule>Protein 2C</molecule>
    <subcellularLocation>
        <location evidence="23">Host cytoplasmic vesicle membrane</location>
        <topology evidence="23">Peripheral membrane protein</topology>
        <orientation evidence="23">Cytoplasmic side</orientation>
    </subcellularLocation>
    <text evidence="23">Probably localizes to the surface of intracellular membrane vesicles that are induced after virus infection as the site for viral RNA replication. These vesicles are probably autophagosome-like vesicles.</text>
</comment>
<comment type="subcellular location">
    <molecule>Protein 3A</molecule>
    <subcellularLocation>
        <location evidence="3">Host cytoplasmic vesicle membrane</location>
        <topology evidence="23">Peripheral membrane protein</topology>
        <orientation evidence="23">Cytoplasmic side</orientation>
    </subcellularLocation>
    <text evidence="3">Probably localizes to the surface of intracellular membrane vesicles that are induced after virus infection as the site for viral RNA replication. These vesicles are probably autophagosome-like vesicles.</text>
</comment>
<comment type="subcellular location">
    <molecule>VPg</molecule>
    <subcellularLocation>
        <location evidence="23">Virion</location>
    </subcellularLocation>
</comment>
<comment type="subcellular location">
    <molecule>Protease 3C</molecule>
    <subcellularLocation>
        <location evidence="23">Host cytoplasm</location>
    </subcellularLocation>
</comment>
<comment type="subcellular location">
    <molecule>RNA-directed RNA polymerase</molecule>
    <subcellularLocation>
        <location evidence="23">Host cytoplasmic vesicle membrane</location>
        <topology evidence="23">Peripheral membrane protein</topology>
        <orientation evidence="23">Cytoplasmic side</orientation>
    </subcellularLocation>
    <text evidence="23">Probably localizes to the surface of intracellular membrane vesicles that are induced after virus infection as the site for viral RNA replication. These vesicles are probably autophagosome-like vesicles.</text>
</comment>
<comment type="alternative products">
    <event type="ribosomal frameshifting"/>
    <isoform>
        <id>P12296-1</id>
        <name>Genome polyprotein</name>
        <sequence type="displayed"/>
    </isoform>
    <isoform>
        <id>P0DJX8-1</id>
        <name>2B*</name>
        <sequence type="external"/>
    </isoform>
</comment>
<comment type="PTM">
    <molecule>Leader protein</molecule>
    <text evidence="17">Phosphorylated.</text>
</comment>
<comment type="PTM">
    <molecule>Genome polyprotein</molecule>
    <text evidence="3 22">Specific enzymatic cleavages by the viral protease in vivo yield a variety of precursors and mature proteins (PubMed:8972564). The polyprotein seems to be cotranslationally cleaved at the 2A/2B junction by a ribosomal skip from one codon to the next without formation of a peptide bond (By similarity). This process would release the P1-2A peptide from the translational complex (By similarity).</text>
</comment>
<comment type="PTM">
    <molecule>Capsid protein VP0</molecule>
    <text evidence="2">During virion maturation, immature virions are rendered infectious following cleavage of VP0 into VP4 and VP2. This maturation seems to be an autocatalytic event triggered by the presence of RNA in the capsid and is followed by a conformational change of the particle.</text>
</comment>
<comment type="PTM">
    <molecule>VPg</molecule>
    <text evidence="16">Uridylylated by the polymerase and is covalently linked to the 5'-end of genomic RNA. This uridylylated form acts as a nucleotide-peptide primer for the polymerase.</text>
</comment>
<comment type="PTM">
    <molecule>Capsid protein VP4</molecule>
    <text evidence="7">Myristoylation is required during RNA encapsidation and formation of the mature virus particle.</text>
</comment>
<comment type="miscellaneous">
    <molecule>Isoform Genome polyprotein</molecule>
    <text evidence="15">Produced by conventional translation.</text>
</comment>
<comment type="similarity">
    <text evidence="23">Belongs to the picornaviruses polyprotein family.</text>
</comment>
<comment type="online information" name="Virus Particle ExploreR db">
    <link uri="https://viperdb.org/Info_Page.php?VDB=2mev"/>
    <text>Icosahedral capsid structure</text>
</comment>
<comment type="online information" name="Virus Particle ExploreR db">
    <link uri="https://viperdb.org/Info_Page.php?VDB=1mec"/>
    <text>Icosahedral capsid structure</text>
</comment>
<accession>P12296</accession>
<accession>Q2V6G9</accession>